<reference key="1">
    <citation type="journal article" date="2011" name="PLoS Genet.">
        <title>Whole-genome comparison reveals novel genetic elements that characterize the genome of industrial strains of Saccharomyces cerevisiae.</title>
        <authorList>
            <person name="Borneman A.R."/>
            <person name="Desany B.A."/>
            <person name="Riches D."/>
            <person name="Affourtit J.P."/>
            <person name="Forgan A.H."/>
            <person name="Pretorius I.S."/>
            <person name="Egholm M."/>
            <person name="Chambers P.J."/>
        </authorList>
    </citation>
    <scope>NUCLEOTIDE SEQUENCE [LARGE SCALE GENOMIC DNA]</scope>
    <source>
        <strain>Zymaflore VL3</strain>
    </source>
</reference>
<name>MPS2_YEASZ</name>
<gene>
    <name type="primary">MPS2</name>
    <name type="synonym">MMC1</name>
    <name type="ORF">VL3_1713</name>
</gene>
<dbReference type="EMBL" id="AEJS01000032">
    <property type="protein sequence ID" value="EGA86760.1"/>
    <property type="molecule type" value="Genomic_DNA"/>
</dbReference>
<dbReference type="SMR" id="E7QET1"/>
<dbReference type="HOGENOM" id="CLU_069890_0_0_1"/>
<dbReference type="OrthoDB" id="4035046at2759"/>
<dbReference type="GO" id="GO:0005737">
    <property type="term" value="C:cytoplasm"/>
    <property type="evidence" value="ECO:0007669"/>
    <property type="project" value="UniProtKB-KW"/>
</dbReference>
<dbReference type="GO" id="GO:0031965">
    <property type="term" value="C:nuclear membrane"/>
    <property type="evidence" value="ECO:0007669"/>
    <property type="project" value="UniProtKB-SubCell"/>
</dbReference>
<dbReference type="GO" id="GO:0005816">
    <property type="term" value="C:spindle pole body"/>
    <property type="evidence" value="ECO:0007669"/>
    <property type="project" value="UniProtKB-SubCell"/>
</dbReference>
<dbReference type="GO" id="GO:0071988">
    <property type="term" value="P:protein localization to spindle pole body"/>
    <property type="evidence" value="ECO:0007669"/>
    <property type="project" value="InterPro"/>
</dbReference>
<dbReference type="GO" id="GO:0030474">
    <property type="term" value="P:spindle pole body duplication"/>
    <property type="evidence" value="ECO:0007669"/>
    <property type="project" value="InterPro"/>
</dbReference>
<dbReference type="InterPro" id="IPR031433">
    <property type="entry name" value="Mps2"/>
</dbReference>
<dbReference type="Pfam" id="PF17060">
    <property type="entry name" value="MPS2"/>
    <property type="match status" value="1"/>
</dbReference>
<feature type="chain" id="PRO_0000409168" description="Monopolar spindle protein 2">
    <location>
        <begin position="1"/>
        <end position="387"/>
    </location>
</feature>
<feature type="transmembrane region" description="Helical" evidence="2">
    <location>
        <begin position="311"/>
        <end position="327"/>
    </location>
</feature>
<feature type="region of interest" description="Disordered" evidence="3">
    <location>
        <begin position="216"/>
        <end position="235"/>
    </location>
</feature>
<feature type="coiled-coil region" evidence="2">
    <location>
        <begin position="157"/>
        <end position="269"/>
    </location>
</feature>
<feature type="compositionally biased region" description="Polar residues" evidence="3">
    <location>
        <begin position="220"/>
        <end position="230"/>
    </location>
</feature>
<comment type="function">
    <text evidence="1">Component of the spindle pole body (SPB) required for insertion of the nascent SPB into the nuclear envelope and for the proper execution of spindle pole body (SPB) duplication.</text>
</comment>
<comment type="subunit">
    <text evidence="1">Interacts with BBP1, MPS3, and SPC24.</text>
</comment>
<comment type="subcellular location">
    <subcellularLocation>
        <location evidence="1">Nucleus membrane</location>
        <topology evidence="1">Single-pass membrane protein</topology>
    </subcellularLocation>
    <subcellularLocation>
        <location evidence="1">Cytoplasm</location>
        <location evidence="1">Cytoskeleton</location>
        <location evidence="1">Microtubule organizing center</location>
        <location evidence="1">Spindle pole body</location>
    </subcellularLocation>
</comment>
<comment type="similarity">
    <text evidence="4">Belongs to the MPS2 family.</text>
</comment>
<keyword id="KW-0175">Coiled coil</keyword>
<keyword id="KW-0963">Cytoplasm</keyword>
<keyword id="KW-0206">Cytoskeleton</keyword>
<keyword id="KW-0472">Membrane</keyword>
<keyword id="KW-0539">Nucleus</keyword>
<keyword id="KW-0812">Transmembrane</keyword>
<keyword id="KW-1133">Transmembrane helix</keyword>
<sequence>MSNGAFDAIFEYAWGQIDKPISGDFIYGKDLPKLIEIIENIFQKAQKSGSYELRLPLFSEINKDLFRTFSNTKTFFKIHKEEFDDIFFNLVNHPLREILENAFIGVDSIPSDFIVSMNLNSPSKFLVENKSKNTEGAGISTPRKKLTESPIKLLSRNNIGKALEVQVEELKRELTAKQSLLQENERQVSELKIRLETYQEKYASIQQRFSDLQKARQVEDNQNSSRTSDPGSPLVTGIDQKAILEEFRRRLQRQTDTISFLKDQIRRERGLNCSNDKVSHSKRKHATTDGDGTFKNFISAVPSNIWVKATIRIIVCFALLAGVLPYIRKYVYAHDTPSQNSRLQLSWWENSGILSKIVWFFEDQTDLETEYRSNANVDDAYSRVFGI</sequence>
<protein>
    <recommendedName>
        <fullName>Monopolar spindle protein 2</fullName>
    </recommendedName>
</protein>
<organism>
    <name type="scientific">Saccharomyces cerevisiae (strain Zymaflore VL3)</name>
    <name type="common">Baker's yeast</name>
    <dbReference type="NCBI Taxonomy" id="764100"/>
    <lineage>
        <taxon>Eukaryota</taxon>
        <taxon>Fungi</taxon>
        <taxon>Dikarya</taxon>
        <taxon>Ascomycota</taxon>
        <taxon>Saccharomycotina</taxon>
        <taxon>Saccharomycetes</taxon>
        <taxon>Saccharomycetales</taxon>
        <taxon>Saccharomycetaceae</taxon>
        <taxon>Saccharomyces</taxon>
    </lineage>
</organism>
<accession>E7QET1</accession>
<proteinExistence type="inferred from homology"/>
<evidence type="ECO:0000250" key="1"/>
<evidence type="ECO:0000255" key="2"/>
<evidence type="ECO:0000256" key="3">
    <source>
        <dbReference type="SAM" id="MobiDB-lite"/>
    </source>
</evidence>
<evidence type="ECO:0000305" key="4"/>